<name>SMD1A_ARATH</name>
<reference key="1">
    <citation type="journal article" date="2000" name="Nature">
        <title>Sequence and analysis of chromosome 3 of the plant Arabidopsis thaliana.</title>
        <authorList>
            <person name="Salanoubat M."/>
            <person name="Lemcke K."/>
            <person name="Rieger M."/>
            <person name="Ansorge W."/>
            <person name="Unseld M."/>
            <person name="Fartmann B."/>
            <person name="Valle G."/>
            <person name="Bloecker H."/>
            <person name="Perez-Alonso M."/>
            <person name="Obermaier B."/>
            <person name="Delseny M."/>
            <person name="Boutry M."/>
            <person name="Grivell L.A."/>
            <person name="Mache R."/>
            <person name="Puigdomenech P."/>
            <person name="De Simone V."/>
            <person name="Choisne N."/>
            <person name="Artiguenave F."/>
            <person name="Robert C."/>
            <person name="Brottier P."/>
            <person name="Wincker P."/>
            <person name="Cattolico L."/>
            <person name="Weissenbach J."/>
            <person name="Saurin W."/>
            <person name="Quetier F."/>
            <person name="Schaefer M."/>
            <person name="Mueller-Auer S."/>
            <person name="Gabel C."/>
            <person name="Fuchs M."/>
            <person name="Benes V."/>
            <person name="Wurmbach E."/>
            <person name="Drzonek H."/>
            <person name="Erfle H."/>
            <person name="Jordan N."/>
            <person name="Bangert S."/>
            <person name="Wiedelmann R."/>
            <person name="Kranz H."/>
            <person name="Voss H."/>
            <person name="Holland R."/>
            <person name="Brandt P."/>
            <person name="Nyakatura G."/>
            <person name="Vezzi A."/>
            <person name="D'Angelo M."/>
            <person name="Pallavicini A."/>
            <person name="Toppo S."/>
            <person name="Simionati B."/>
            <person name="Conrad A."/>
            <person name="Hornischer K."/>
            <person name="Kauer G."/>
            <person name="Loehnert T.-H."/>
            <person name="Nordsiek G."/>
            <person name="Reichelt J."/>
            <person name="Scharfe M."/>
            <person name="Schoen O."/>
            <person name="Bargues M."/>
            <person name="Terol J."/>
            <person name="Climent J."/>
            <person name="Navarro P."/>
            <person name="Collado C."/>
            <person name="Perez-Perez A."/>
            <person name="Ottenwaelder B."/>
            <person name="Duchemin D."/>
            <person name="Cooke R."/>
            <person name="Laudie M."/>
            <person name="Berger-Llauro C."/>
            <person name="Purnelle B."/>
            <person name="Masuy D."/>
            <person name="de Haan M."/>
            <person name="Maarse A.C."/>
            <person name="Alcaraz J.-P."/>
            <person name="Cottet A."/>
            <person name="Casacuberta E."/>
            <person name="Monfort A."/>
            <person name="Argiriou A."/>
            <person name="Flores M."/>
            <person name="Liguori R."/>
            <person name="Vitale D."/>
            <person name="Mannhaupt G."/>
            <person name="Haase D."/>
            <person name="Schoof H."/>
            <person name="Rudd S."/>
            <person name="Zaccaria P."/>
            <person name="Mewes H.-W."/>
            <person name="Mayer K.F.X."/>
            <person name="Kaul S."/>
            <person name="Town C.D."/>
            <person name="Koo H.L."/>
            <person name="Tallon L.J."/>
            <person name="Jenkins J."/>
            <person name="Rooney T."/>
            <person name="Rizzo M."/>
            <person name="Walts A."/>
            <person name="Utterback T."/>
            <person name="Fujii C.Y."/>
            <person name="Shea T.P."/>
            <person name="Creasy T.H."/>
            <person name="Haas B."/>
            <person name="Maiti R."/>
            <person name="Wu D."/>
            <person name="Peterson J."/>
            <person name="Van Aken S."/>
            <person name="Pai G."/>
            <person name="Militscher J."/>
            <person name="Sellers P."/>
            <person name="Gill J.E."/>
            <person name="Feldblyum T.V."/>
            <person name="Preuss D."/>
            <person name="Lin X."/>
            <person name="Nierman W.C."/>
            <person name="Salzberg S.L."/>
            <person name="White O."/>
            <person name="Venter J.C."/>
            <person name="Fraser C.M."/>
            <person name="Kaneko T."/>
            <person name="Nakamura Y."/>
            <person name="Sato S."/>
            <person name="Kato T."/>
            <person name="Asamizu E."/>
            <person name="Sasamoto S."/>
            <person name="Kimura T."/>
            <person name="Idesawa K."/>
            <person name="Kawashima K."/>
            <person name="Kishida Y."/>
            <person name="Kiyokawa C."/>
            <person name="Kohara M."/>
            <person name="Matsumoto M."/>
            <person name="Matsuno A."/>
            <person name="Muraki A."/>
            <person name="Nakayama S."/>
            <person name="Nakazaki N."/>
            <person name="Shinpo S."/>
            <person name="Takeuchi C."/>
            <person name="Wada T."/>
            <person name="Watanabe A."/>
            <person name="Yamada M."/>
            <person name="Yasuda M."/>
            <person name="Tabata S."/>
        </authorList>
    </citation>
    <scope>NUCLEOTIDE SEQUENCE [LARGE SCALE GENOMIC DNA]</scope>
    <source>
        <strain>cv. Columbia</strain>
    </source>
</reference>
<reference key="2">
    <citation type="journal article" date="2017" name="Plant J.">
        <title>Araport11: a complete reannotation of the Arabidopsis thaliana reference genome.</title>
        <authorList>
            <person name="Cheng C.Y."/>
            <person name="Krishnakumar V."/>
            <person name="Chan A.P."/>
            <person name="Thibaud-Nissen F."/>
            <person name="Schobel S."/>
            <person name="Town C.D."/>
        </authorList>
    </citation>
    <scope>GENOME REANNOTATION</scope>
    <source>
        <strain>cv. Columbia</strain>
    </source>
</reference>
<reference key="3">
    <citation type="journal article" date="2003" name="Science">
        <title>Empirical analysis of transcriptional activity in the Arabidopsis genome.</title>
        <authorList>
            <person name="Yamada K."/>
            <person name="Lim J."/>
            <person name="Dale J.M."/>
            <person name="Chen H."/>
            <person name="Shinn P."/>
            <person name="Palm C.J."/>
            <person name="Southwick A.M."/>
            <person name="Wu H.C."/>
            <person name="Kim C.J."/>
            <person name="Nguyen M."/>
            <person name="Pham P.K."/>
            <person name="Cheuk R.F."/>
            <person name="Karlin-Newmann G."/>
            <person name="Liu S.X."/>
            <person name="Lam B."/>
            <person name="Sakano H."/>
            <person name="Wu T."/>
            <person name="Yu G."/>
            <person name="Miranda M."/>
            <person name="Quach H.L."/>
            <person name="Tripp M."/>
            <person name="Chang C.H."/>
            <person name="Lee J.M."/>
            <person name="Toriumi M.J."/>
            <person name="Chan M.M."/>
            <person name="Tang C.C."/>
            <person name="Onodera C.S."/>
            <person name="Deng J.M."/>
            <person name="Akiyama K."/>
            <person name="Ansari Y."/>
            <person name="Arakawa T."/>
            <person name="Banh J."/>
            <person name="Banno F."/>
            <person name="Bowser L."/>
            <person name="Brooks S.Y."/>
            <person name="Carninci P."/>
            <person name="Chao Q."/>
            <person name="Choy N."/>
            <person name="Enju A."/>
            <person name="Goldsmith A.D."/>
            <person name="Gurjal M."/>
            <person name="Hansen N.F."/>
            <person name="Hayashizaki Y."/>
            <person name="Johnson-Hopson C."/>
            <person name="Hsuan V.W."/>
            <person name="Iida K."/>
            <person name="Karnes M."/>
            <person name="Khan S."/>
            <person name="Koesema E."/>
            <person name="Ishida J."/>
            <person name="Jiang P.X."/>
            <person name="Jones T."/>
            <person name="Kawai J."/>
            <person name="Kamiya A."/>
            <person name="Meyers C."/>
            <person name="Nakajima M."/>
            <person name="Narusaka M."/>
            <person name="Seki M."/>
            <person name="Sakurai T."/>
            <person name="Satou M."/>
            <person name="Tamse R."/>
            <person name="Vaysberg M."/>
            <person name="Wallender E.K."/>
            <person name="Wong C."/>
            <person name="Yamamura Y."/>
            <person name="Yuan S."/>
            <person name="Shinozaki K."/>
            <person name="Davis R.W."/>
            <person name="Theologis A."/>
            <person name="Ecker J.R."/>
        </authorList>
    </citation>
    <scope>NUCLEOTIDE SEQUENCE [LARGE SCALE MRNA] (ISOFORM 1)</scope>
    <source>
        <strain>cv. Columbia</strain>
    </source>
</reference>
<reference key="4">
    <citation type="journal article" date="2009" name="DNA Res.">
        <title>Analysis of multiple occurrences of alternative splicing events in Arabidopsis thaliana using novel sequenced full-length cDNAs.</title>
        <authorList>
            <person name="Iida K."/>
            <person name="Fukami-Kobayashi K."/>
            <person name="Toyoda A."/>
            <person name="Sakaki Y."/>
            <person name="Kobayashi M."/>
            <person name="Seki M."/>
            <person name="Shinozaki K."/>
        </authorList>
    </citation>
    <scope>NUCLEOTIDE SEQUENCE [LARGE SCALE MRNA] (ISOFORM 3)</scope>
    <source>
        <strain>cv. Columbia</strain>
        <tissue evidence="10">Rosette leaf</tissue>
    </source>
</reference>
<reference key="5">
    <citation type="submission" date="2002-03" db="EMBL/GenBank/DDBJ databases">
        <title>Full-length cDNA from Arabidopsis thaliana.</title>
        <authorList>
            <person name="Brover V.V."/>
            <person name="Troukhan M.E."/>
            <person name="Alexandrov N.A."/>
            <person name="Lu Y.-P."/>
            <person name="Flavell R.B."/>
            <person name="Feldmann K.A."/>
        </authorList>
    </citation>
    <scope>NUCLEOTIDE SEQUENCE [LARGE SCALE MRNA] (ISOFORM 1)</scope>
</reference>
<reference key="6">
    <citation type="journal article" date="2004" name="Genome Biol.">
        <title>The ASRG database: identification and survey of Arabidopsis thaliana genes involved in pre-mRNA splicing.</title>
        <authorList>
            <person name="Wang B.B."/>
            <person name="Brendel V."/>
        </authorList>
    </citation>
    <scope>GENE FAMILY</scope>
    <scope>NOMENCLATURE</scope>
</reference>
<reference key="7">
    <citation type="journal article" date="2016" name="Plant Cell">
        <title>The nuclear ribonucleoprotein SmD1 interplays with splicing, RNA quality control, and posttranscriptional gene silencing in Arabidopsis.</title>
        <authorList>
            <person name="Elvira-Matelot E."/>
            <person name="Bardou F."/>
            <person name="Ariel F."/>
            <person name="Jauvion V."/>
            <person name="Bouteiller N."/>
            <person name="Le Masson I."/>
            <person name="Cao J."/>
            <person name="Crespi M.D."/>
            <person name="Vaucheret H."/>
        </authorList>
    </citation>
    <scope>FUNCTION</scope>
    <scope>DISRUPTION PHENOTYPE</scope>
    <scope>SUBCELLULAR LOCATION</scope>
</reference>
<sequence>MKLVRFLMKLNNETVSIELKNGTVVHGTITGVDVSMNTHLKTVKMSLKGKNPVTLDHLSLRGNNIRYYILPDSLNLETLLVEDTPRVKPKKPVAGKAVGRGRGRGRGRGRGRGR</sequence>
<protein>
    <recommendedName>
        <fullName evidence="5">Small nuclear ribonucleoprotein SmD1a</fullName>
        <shortName evidence="5">AtSmD1-a</shortName>
    </recommendedName>
</protein>
<comment type="function">
    <text evidence="4">Involved in splicing regulation. Facilitates post-transcriptional gene silencing (PTGS) by limiting the degradation of transgene aberrant RNAs by the RNA quality control (RQC) machinery, thus favoring their entry into cytoplasmic siRNA bodies where they can trigger PTGS. Does not participate in the production of small RNAs.</text>
</comment>
<comment type="subcellular location">
    <subcellularLocation>
        <location evidence="4">Nucleus</location>
    </subcellularLocation>
    <subcellularLocation>
        <location evidence="1">Nucleus speckle</location>
    </subcellularLocation>
    <subcellularLocation>
        <location evidence="1">Nucleus</location>
        <location evidence="1">Nucleolus</location>
    </subcellularLocation>
</comment>
<comment type="alternative products">
    <event type="alternative splicing"/>
    <isoform>
        <id>Q9SSF1-1</id>
        <name>1</name>
        <sequence type="displayed"/>
    </isoform>
    <isoform>
        <id>Q9SSF1-2</id>
        <name>2</name>
        <sequence type="described" ref="VSP_058954"/>
    </isoform>
    <isoform>
        <id>Q9SSF1-3</id>
        <name>3</name>
        <sequence type="described" ref="VSP_058953"/>
    </isoform>
</comment>
<comment type="disruption phenotype">
    <text evidence="4">No visible phenotype (PubMed:26842463). Smd1a and smd2b double mutants are embryo lethal (PubMed:26842463).</text>
</comment>
<comment type="miscellaneous">
    <text evidence="7">SMD1A and SMD1B have redundant activity, but consistent with their expression level, SMD1B is more important than SMD1A and either one copy of SMD1B or two copies of SMD1A is necessary for the plant to survive.</text>
</comment>
<comment type="similarity">
    <text evidence="6">Belongs to the snRNP core protein family.</text>
</comment>
<accession>Q9SSF1</accession>
<accession>A0A1I9LP96</accession>
<accession>C0Z3G9</accession>
<evidence type="ECO:0000250" key="1">
    <source>
        <dbReference type="UniProtKB" id="Q9SY09"/>
    </source>
</evidence>
<evidence type="ECO:0000255" key="2">
    <source>
        <dbReference type="PROSITE-ProRule" id="PRU01346"/>
    </source>
</evidence>
<evidence type="ECO:0000256" key="3">
    <source>
        <dbReference type="SAM" id="MobiDB-lite"/>
    </source>
</evidence>
<evidence type="ECO:0000269" key="4">
    <source>
    </source>
</evidence>
<evidence type="ECO:0000303" key="5">
    <source>
    </source>
</evidence>
<evidence type="ECO:0000305" key="6"/>
<evidence type="ECO:0000305" key="7">
    <source>
    </source>
</evidence>
<evidence type="ECO:0000312" key="8">
    <source>
        <dbReference type="Araport" id="AT3G07590"/>
    </source>
</evidence>
<evidence type="ECO:0000312" key="9">
    <source>
        <dbReference type="EMBL" id="AAF13077.1"/>
    </source>
</evidence>
<evidence type="ECO:0000312" key="10">
    <source>
        <dbReference type="EMBL" id="BAH57248.1"/>
    </source>
</evidence>
<gene>
    <name evidence="5" type="primary">SMD1A</name>
    <name evidence="8" type="ordered locus">At3g07590</name>
    <name evidence="9" type="ORF">MLP3.4</name>
</gene>
<dbReference type="EMBL" id="AC009176">
    <property type="protein sequence ID" value="AAF13077.1"/>
    <property type="molecule type" value="Genomic_DNA"/>
</dbReference>
<dbReference type="EMBL" id="CP002686">
    <property type="protein sequence ID" value="AEE74570.1"/>
    <property type="molecule type" value="Genomic_DNA"/>
</dbReference>
<dbReference type="EMBL" id="CP002686">
    <property type="protein sequence ID" value="AEE74571.1"/>
    <property type="molecule type" value="Genomic_DNA"/>
</dbReference>
<dbReference type="EMBL" id="CP002686">
    <property type="protein sequence ID" value="ANM64404.1"/>
    <property type="molecule type" value="Genomic_DNA"/>
</dbReference>
<dbReference type="EMBL" id="AY069907">
    <property type="protein sequence ID" value="AAL47458.1"/>
    <property type="molecule type" value="mRNA"/>
</dbReference>
<dbReference type="EMBL" id="AY124838">
    <property type="protein sequence ID" value="AAM70547.1"/>
    <property type="molecule type" value="mRNA"/>
</dbReference>
<dbReference type="EMBL" id="AK319133">
    <property type="protein sequence ID" value="BAH57248.1"/>
    <property type="molecule type" value="mRNA"/>
</dbReference>
<dbReference type="EMBL" id="AY087568">
    <property type="protein sequence ID" value="AAM65110.1"/>
    <property type="molecule type" value="mRNA"/>
</dbReference>
<dbReference type="RefSeq" id="NP_001189837.1">
    <molecule id="Q9SSF1-1"/>
    <property type="nucleotide sequence ID" value="NM_001202908.2"/>
</dbReference>
<dbReference type="RefSeq" id="NP_001326434.1">
    <molecule id="Q9SSF1-2"/>
    <property type="nucleotide sequence ID" value="NM_001337723.1"/>
</dbReference>
<dbReference type="RefSeq" id="NP_187416.1">
    <molecule id="Q9SSF1-1"/>
    <property type="nucleotide sequence ID" value="NM_111638.5"/>
</dbReference>
<dbReference type="SMR" id="Q9SSF1"/>
<dbReference type="FunCoup" id="Q9SSF1">
    <property type="interactions" value="3865"/>
</dbReference>
<dbReference type="STRING" id="3702.Q9SSF1"/>
<dbReference type="PaxDb" id="3702-AT3G07590.2"/>
<dbReference type="ProteomicsDB" id="234471">
    <molecule id="Q9SSF1-1"/>
</dbReference>
<dbReference type="EnsemblPlants" id="AT3G07590.1">
    <molecule id="Q9SSF1-1"/>
    <property type="protein sequence ID" value="AT3G07590.1"/>
    <property type="gene ID" value="AT3G07590"/>
</dbReference>
<dbReference type="EnsemblPlants" id="AT3G07590.2">
    <molecule id="Q9SSF1-1"/>
    <property type="protein sequence ID" value="AT3G07590.2"/>
    <property type="gene ID" value="AT3G07590"/>
</dbReference>
<dbReference type="EnsemblPlants" id="AT3G07590.3">
    <molecule id="Q9SSF1-2"/>
    <property type="protein sequence ID" value="AT3G07590.3"/>
    <property type="gene ID" value="AT3G07590"/>
</dbReference>
<dbReference type="GeneID" id="819950"/>
<dbReference type="Gramene" id="AT3G07590.1">
    <molecule id="Q9SSF1-1"/>
    <property type="protein sequence ID" value="AT3G07590.1"/>
    <property type="gene ID" value="AT3G07590"/>
</dbReference>
<dbReference type="Gramene" id="AT3G07590.2">
    <molecule id="Q9SSF1-1"/>
    <property type="protein sequence ID" value="AT3G07590.2"/>
    <property type="gene ID" value="AT3G07590"/>
</dbReference>
<dbReference type="Gramene" id="AT3G07590.3">
    <molecule id="Q9SSF1-2"/>
    <property type="protein sequence ID" value="AT3G07590.3"/>
    <property type="gene ID" value="AT3G07590"/>
</dbReference>
<dbReference type="KEGG" id="ath:AT3G07590"/>
<dbReference type="Araport" id="AT3G07590"/>
<dbReference type="TAIR" id="AT3G07590">
    <property type="gene designation" value="SMD1A"/>
</dbReference>
<dbReference type="eggNOG" id="KOG3428">
    <property type="taxonomic scope" value="Eukaryota"/>
</dbReference>
<dbReference type="HOGENOM" id="CLU_123956_3_0_1"/>
<dbReference type="InParanoid" id="Q9SSF1"/>
<dbReference type="OMA" id="VKMTLRH"/>
<dbReference type="OrthoDB" id="9626941at2759"/>
<dbReference type="PhylomeDB" id="Q9SSF1"/>
<dbReference type="CD-CODE" id="4299E36E">
    <property type="entry name" value="Nucleolus"/>
</dbReference>
<dbReference type="PRO" id="PR:Q9SSF1"/>
<dbReference type="Proteomes" id="UP000006548">
    <property type="component" value="Chromosome 3"/>
</dbReference>
<dbReference type="ExpressionAtlas" id="Q9SSF1">
    <property type="expression patterns" value="baseline and differential"/>
</dbReference>
<dbReference type="GO" id="GO:0016607">
    <property type="term" value="C:nuclear speck"/>
    <property type="evidence" value="ECO:0000314"/>
    <property type="project" value="UniProtKB"/>
</dbReference>
<dbReference type="GO" id="GO:0005730">
    <property type="term" value="C:nucleolus"/>
    <property type="evidence" value="ECO:0000314"/>
    <property type="project" value="UniProtKB"/>
</dbReference>
<dbReference type="GO" id="GO:0005634">
    <property type="term" value="C:nucleus"/>
    <property type="evidence" value="ECO:0000314"/>
    <property type="project" value="TAIR"/>
</dbReference>
<dbReference type="GO" id="GO:0000325">
    <property type="term" value="C:plant-type vacuole"/>
    <property type="evidence" value="ECO:0007005"/>
    <property type="project" value="TAIR"/>
</dbReference>
<dbReference type="GO" id="GO:1990904">
    <property type="term" value="C:ribonucleoprotein complex"/>
    <property type="evidence" value="ECO:0007669"/>
    <property type="project" value="UniProtKB-KW"/>
</dbReference>
<dbReference type="GO" id="GO:0003723">
    <property type="term" value="F:RNA binding"/>
    <property type="evidence" value="ECO:0007669"/>
    <property type="project" value="InterPro"/>
</dbReference>
<dbReference type="GO" id="GO:0035194">
    <property type="term" value="P:regulatory ncRNA-mediated post-transcriptional gene silencing"/>
    <property type="evidence" value="ECO:0000315"/>
    <property type="project" value="UniProtKB"/>
</dbReference>
<dbReference type="GO" id="GO:0000387">
    <property type="term" value="P:spliceosomal snRNP assembly"/>
    <property type="evidence" value="ECO:0007669"/>
    <property type="project" value="InterPro"/>
</dbReference>
<dbReference type="CDD" id="cd01724">
    <property type="entry name" value="Sm_D1"/>
    <property type="match status" value="1"/>
</dbReference>
<dbReference type="FunFam" id="2.30.30.100:FF:000008">
    <property type="entry name" value="Small nuclear ribonucleoprotein Sm D1"/>
    <property type="match status" value="1"/>
</dbReference>
<dbReference type="Gene3D" id="2.30.30.100">
    <property type="match status" value="2"/>
</dbReference>
<dbReference type="InterPro" id="IPR027141">
    <property type="entry name" value="LSm4/Sm_D1/D3"/>
</dbReference>
<dbReference type="InterPro" id="IPR010920">
    <property type="entry name" value="LSM_dom_sf"/>
</dbReference>
<dbReference type="InterPro" id="IPR047575">
    <property type="entry name" value="Sm"/>
</dbReference>
<dbReference type="InterPro" id="IPR034102">
    <property type="entry name" value="Sm_D1"/>
</dbReference>
<dbReference type="InterPro" id="IPR001163">
    <property type="entry name" value="Sm_dom_euk/arc"/>
</dbReference>
<dbReference type="PANTHER" id="PTHR23338">
    <property type="entry name" value="SMALL NUCLEAR RIBONUCLEOPROTEIN SM"/>
    <property type="match status" value="1"/>
</dbReference>
<dbReference type="Pfam" id="PF01423">
    <property type="entry name" value="LSM"/>
    <property type="match status" value="1"/>
</dbReference>
<dbReference type="SMART" id="SM00651">
    <property type="entry name" value="Sm"/>
    <property type="match status" value="1"/>
</dbReference>
<dbReference type="SUPFAM" id="SSF50182">
    <property type="entry name" value="Sm-like ribonucleoproteins"/>
    <property type="match status" value="1"/>
</dbReference>
<dbReference type="PROSITE" id="PS52002">
    <property type="entry name" value="SM"/>
    <property type="match status" value="1"/>
</dbReference>
<feature type="chain" id="PRO_0000440135" description="Small nuclear ribonucleoprotein SmD1a">
    <location>
        <begin position="1"/>
        <end position="114"/>
    </location>
</feature>
<feature type="domain" description="Sm" evidence="2">
    <location>
        <begin position="2"/>
        <end position="74"/>
    </location>
</feature>
<feature type="repeat" description="1" evidence="6">
    <location>
        <begin position="99"/>
        <end position="100"/>
    </location>
</feature>
<feature type="repeat" description="2" evidence="6">
    <location>
        <begin position="101"/>
        <end position="102"/>
    </location>
</feature>
<feature type="repeat" description="3" evidence="6">
    <location>
        <begin position="103"/>
        <end position="104"/>
    </location>
</feature>
<feature type="repeat" description="4" evidence="6">
    <location>
        <begin position="105"/>
        <end position="106"/>
    </location>
</feature>
<feature type="repeat" description="5" evidence="6">
    <location>
        <begin position="107"/>
        <end position="108"/>
    </location>
</feature>
<feature type="repeat" description="6" evidence="6">
    <location>
        <begin position="109"/>
        <end position="110"/>
    </location>
</feature>
<feature type="repeat" description="7" evidence="6">
    <location>
        <begin position="111"/>
        <end position="112"/>
    </location>
</feature>
<feature type="repeat" description="8" evidence="6">
    <location>
        <begin position="113"/>
        <end position="114"/>
    </location>
</feature>
<feature type="region of interest" description="Disordered" evidence="3">
    <location>
        <begin position="87"/>
        <end position="114"/>
    </location>
</feature>
<feature type="region of interest" description="8 X 2 AA tandem repeats of G-R" evidence="6">
    <location>
        <begin position="99"/>
        <end position="114"/>
    </location>
</feature>
<feature type="splice variant" id="VSP_058953" description="In isoform 3.">
    <location>
        <begin position="1"/>
        <end position="35"/>
    </location>
</feature>
<feature type="splice variant" id="VSP_058954" description="In isoform 2.">
    <original>MKLVRFLMKLNNETVSIELKNGTVVHGTIT</original>
    <variation>MIWA</variation>
    <location>
        <begin position="1"/>
        <end position="30"/>
    </location>
</feature>
<keyword id="KW-0025">Alternative splicing</keyword>
<keyword id="KW-0507">mRNA processing</keyword>
<keyword id="KW-0539">Nucleus</keyword>
<keyword id="KW-1185">Reference proteome</keyword>
<keyword id="KW-0677">Repeat</keyword>
<keyword id="KW-0687">Ribonucleoprotein</keyword>
<proteinExistence type="inferred from homology"/>
<organism>
    <name type="scientific">Arabidopsis thaliana</name>
    <name type="common">Mouse-ear cress</name>
    <dbReference type="NCBI Taxonomy" id="3702"/>
    <lineage>
        <taxon>Eukaryota</taxon>
        <taxon>Viridiplantae</taxon>
        <taxon>Streptophyta</taxon>
        <taxon>Embryophyta</taxon>
        <taxon>Tracheophyta</taxon>
        <taxon>Spermatophyta</taxon>
        <taxon>Magnoliopsida</taxon>
        <taxon>eudicotyledons</taxon>
        <taxon>Gunneridae</taxon>
        <taxon>Pentapetalae</taxon>
        <taxon>rosids</taxon>
        <taxon>malvids</taxon>
        <taxon>Brassicales</taxon>
        <taxon>Brassicaceae</taxon>
        <taxon>Camelineae</taxon>
        <taxon>Arabidopsis</taxon>
    </lineage>
</organism>